<accession>A7FIC8</accession>
<proteinExistence type="inferred from homology"/>
<protein>
    <recommendedName>
        <fullName evidence="1">Probable transcriptional regulatory protein YpsIP31758_2033</fullName>
    </recommendedName>
</protein>
<keyword id="KW-0963">Cytoplasm</keyword>
<keyword id="KW-0238">DNA-binding</keyword>
<keyword id="KW-0804">Transcription</keyword>
<keyword id="KW-0805">Transcription regulation</keyword>
<organism>
    <name type="scientific">Yersinia pseudotuberculosis serotype O:1b (strain IP 31758)</name>
    <dbReference type="NCBI Taxonomy" id="349747"/>
    <lineage>
        <taxon>Bacteria</taxon>
        <taxon>Pseudomonadati</taxon>
        <taxon>Pseudomonadota</taxon>
        <taxon>Gammaproteobacteria</taxon>
        <taxon>Enterobacterales</taxon>
        <taxon>Yersiniaceae</taxon>
        <taxon>Yersinia</taxon>
    </lineage>
</organism>
<name>Y2033_YERP3</name>
<feature type="chain" id="PRO_1000062043" description="Probable transcriptional regulatory protein YpsIP31758_2033">
    <location>
        <begin position="1"/>
        <end position="247"/>
    </location>
</feature>
<comment type="subcellular location">
    <subcellularLocation>
        <location evidence="1">Cytoplasm</location>
    </subcellularLocation>
</comment>
<comment type="similarity">
    <text evidence="1">Belongs to the TACO1 family.</text>
</comment>
<dbReference type="EMBL" id="CP000720">
    <property type="protein sequence ID" value="ABS49392.1"/>
    <property type="molecule type" value="Genomic_DNA"/>
</dbReference>
<dbReference type="RefSeq" id="WP_002211202.1">
    <property type="nucleotide sequence ID" value="NC_009708.1"/>
</dbReference>
<dbReference type="SMR" id="A7FIC8"/>
<dbReference type="KEGG" id="ypi:YpsIP31758_2033"/>
<dbReference type="HOGENOM" id="CLU_062974_2_2_6"/>
<dbReference type="Proteomes" id="UP000002412">
    <property type="component" value="Chromosome"/>
</dbReference>
<dbReference type="GO" id="GO:0005829">
    <property type="term" value="C:cytosol"/>
    <property type="evidence" value="ECO:0007669"/>
    <property type="project" value="TreeGrafter"/>
</dbReference>
<dbReference type="GO" id="GO:0003677">
    <property type="term" value="F:DNA binding"/>
    <property type="evidence" value="ECO:0007669"/>
    <property type="project" value="UniProtKB-UniRule"/>
</dbReference>
<dbReference type="GO" id="GO:0006355">
    <property type="term" value="P:regulation of DNA-templated transcription"/>
    <property type="evidence" value="ECO:0007669"/>
    <property type="project" value="UniProtKB-UniRule"/>
</dbReference>
<dbReference type="FunFam" id="1.10.10.200:FF:000001">
    <property type="entry name" value="Probable transcriptional regulatory protein YebC"/>
    <property type="match status" value="1"/>
</dbReference>
<dbReference type="FunFam" id="3.30.70.980:FF:000002">
    <property type="entry name" value="Probable transcriptional regulatory protein YebC"/>
    <property type="match status" value="1"/>
</dbReference>
<dbReference type="Gene3D" id="1.10.10.200">
    <property type="match status" value="1"/>
</dbReference>
<dbReference type="Gene3D" id="3.30.70.980">
    <property type="match status" value="2"/>
</dbReference>
<dbReference type="HAMAP" id="MF_00693">
    <property type="entry name" value="Transcrip_reg_TACO1"/>
    <property type="match status" value="1"/>
</dbReference>
<dbReference type="InterPro" id="IPR017856">
    <property type="entry name" value="Integrase-like_N"/>
</dbReference>
<dbReference type="InterPro" id="IPR048300">
    <property type="entry name" value="TACO1_YebC-like_2nd/3rd_dom"/>
</dbReference>
<dbReference type="InterPro" id="IPR049083">
    <property type="entry name" value="TACO1_YebC_N"/>
</dbReference>
<dbReference type="InterPro" id="IPR002876">
    <property type="entry name" value="Transcrip_reg_TACO1-like"/>
</dbReference>
<dbReference type="InterPro" id="IPR026564">
    <property type="entry name" value="Transcrip_reg_TACO1-like_dom3"/>
</dbReference>
<dbReference type="InterPro" id="IPR029072">
    <property type="entry name" value="YebC-like"/>
</dbReference>
<dbReference type="NCBIfam" id="NF001030">
    <property type="entry name" value="PRK00110.1"/>
    <property type="match status" value="1"/>
</dbReference>
<dbReference type="NCBIfam" id="NF009044">
    <property type="entry name" value="PRK12378.1"/>
    <property type="match status" value="1"/>
</dbReference>
<dbReference type="NCBIfam" id="TIGR01033">
    <property type="entry name" value="YebC/PmpR family DNA-binding transcriptional regulator"/>
    <property type="match status" value="1"/>
</dbReference>
<dbReference type="PANTHER" id="PTHR12532:SF6">
    <property type="entry name" value="TRANSCRIPTIONAL REGULATORY PROTEIN YEBC-RELATED"/>
    <property type="match status" value="1"/>
</dbReference>
<dbReference type="PANTHER" id="PTHR12532">
    <property type="entry name" value="TRANSLATIONAL ACTIVATOR OF CYTOCHROME C OXIDASE 1"/>
    <property type="match status" value="1"/>
</dbReference>
<dbReference type="Pfam" id="PF20772">
    <property type="entry name" value="TACO1_YebC_N"/>
    <property type="match status" value="1"/>
</dbReference>
<dbReference type="Pfam" id="PF01709">
    <property type="entry name" value="Transcrip_reg"/>
    <property type="match status" value="1"/>
</dbReference>
<dbReference type="SUPFAM" id="SSF75625">
    <property type="entry name" value="YebC-like"/>
    <property type="match status" value="1"/>
</dbReference>
<gene>
    <name type="ordered locus">YpsIP31758_2033</name>
</gene>
<evidence type="ECO:0000255" key="1">
    <source>
        <dbReference type="HAMAP-Rule" id="MF_00693"/>
    </source>
</evidence>
<sequence>MAGHSKWANTKHRKAAQDAKRGKIFTKIIRELVTAARLGGGDPGANPRLRAAIDKALSNNMTRDTLNRAIARGVGGDEDNNMETIIYEGYGPGGTAVMVECLSDNRNRTVSEVRHAFTKTGGNLGTDGSVSYLFTKKGVISYAPGLEEDTVMDAALEAGADDIVVYDDGAIDVFTAWESLGAVKDALDATGLVAEGAEVSLIPSTKAELDAETAPKLLRLIDMLEDSDDVQEVYHNGEISDEVAATL</sequence>
<reference key="1">
    <citation type="journal article" date="2007" name="PLoS Genet.">
        <title>The complete genome sequence of Yersinia pseudotuberculosis IP31758, the causative agent of Far East scarlet-like fever.</title>
        <authorList>
            <person name="Eppinger M."/>
            <person name="Rosovitz M.J."/>
            <person name="Fricke W.F."/>
            <person name="Rasko D.A."/>
            <person name="Kokorina G."/>
            <person name="Fayolle C."/>
            <person name="Lindler L.E."/>
            <person name="Carniel E."/>
            <person name="Ravel J."/>
        </authorList>
    </citation>
    <scope>NUCLEOTIDE SEQUENCE [LARGE SCALE GENOMIC DNA]</scope>
    <source>
        <strain>IP 31758</strain>
    </source>
</reference>